<accession>Q80Y20</accession>
<accession>Q3TUG4</accession>
<accession>Q8BV08</accession>
<accession>Q9CX44</accession>
<protein>
    <recommendedName>
        <fullName>tRNA (carboxymethyluridine(34)-5-O)-methyltransferase ALKBH8</fullName>
        <ecNumber evidence="2">2.1.1.229</ecNumber>
    </recommendedName>
    <alternativeName>
        <fullName>Alkylated DNA repair protein alkB homolog 8</fullName>
    </alternativeName>
    <alternativeName>
        <fullName>Alpha-ketoglutarate-dependent dioxygenase ALKBH8</fullName>
    </alternativeName>
    <alternativeName>
        <fullName>S-adenosyl-L-methionine-dependent tRNA methyltransferase ALKBH8</fullName>
    </alternativeName>
</protein>
<name>ALKB8_MOUSE</name>
<sequence length="664" mass="74768">MNINHKGVLKLTKMEKKFLRKQSKARHVLLKHEGIQAVSYPTQSLVIANGGLGNGVSRKQLLLTLEKCGPVEALLMPPNKPYAFVIFQTIEESKKAYFTLNGKEIIDDLGQKIFLYLNFVEKAQWKNMGLEALPPGLLVVEEIISSEEEKKLLESVNWTEDTGNQNFQRSLKHRRVKHFGYEFHYESNTVDKDKPLPGGLPEVCSSILEKLLKEGYIKHKPDQLTINQYEPGHGIPAHIDTHSAFEDEIISLSLGSAIVMDFKHPEGVTVQVMLPRRSLLVMTGESRYLWTHGITPRKFDTVQASEQFKGGIITSDIGDLTLSKRGMRTSFTFRKVRRMPCNCSYSSVCDRQRKATPPSLTESSKEALELEQKHVHQVYNEIASHFSSTRHSPWPRIVEFLKALPSGSIVADIGCGNGKYLGINKDLYMIGCDRSQNLVDICRERQFQALVCDALAVPVRSGSCDACISIAVIHHFATAERRVEALQELARLLRPGGQALIYVWAMEQEYKNQKSKYLRGKRISQGDKDELNSATSTEEFLVNQTPEGVNEDPALSVNSSSITKEEEYKSRKVPNSELPIHINRTCFHSQDVLVPWHLKRNPGKDKAIEPSGVAGCPDPSPVFHRYYHVFCDGELEASCQAVGDVSILQSYYDQGNWCVVLQKV</sequence>
<keyword id="KW-0025">Alternative splicing</keyword>
<keyword id="KW-0963">Cytoplasm</keyword>
<keyword id="KW-0408">Iron</keyword>
<keyword id="KW-0479">Metal-binding</keyword>
<keyword id="KW-0489">Methyltransferase</keyword>
<keyword id="KW-0511">Multifunctional enzyme</keyword>
<keyword id="KW-0539">Nucleus</keyword>
<keyword id="KW-1185">Reference proteome</keyword>
<keyword id="KW-0694">RNA-binding</keyword>
<keyword id="KW-0949">S-adenosyl-L-methionine</keyword>
<keyword id="KW-0808">Transferase</keyword>
<keyword id="KW-0862">Zinc</keyword>
<dbReference type="EC" id="2.1.1.229" evidence="2"/>
<dbReference type="EMBL" id="AK020197">
    <property type="protein sequence ID" value="BAB32026.1"/>
    <property type="molecule type" value="mRNA"/>
</dbReference>
<dbReference type="EMBL" id="AK081459">
    <property type="protein sequence ID" value="BAC38223.1"/>
    <property type="status" value="ALT_FRAME"/>
    <property type="molecule type" value="mRNA"/>
</dbReference>
<dbReference type="EMBL" id="AK160783">
    <property type="protein sequence ID" value="BAE36007.1"/>
    <property type="molecule type" value="mRNA"/>
</dbReference>
<dbReference type="EMBL" id="BC050863">
    <property type="protein sequence ID" value="AAH50863.1"/>
    <property type="molecule type" value="mRNA"/>
</dbReference>
<dbReference type="CCDS" id="CCDS22792.1">
    <molecule id="Q80Y20-1"/>
</dbReference>
<dbReference type="RefSeq" id="NP_001391966.1">
    <molecule id="Q80Y20-1"/>
    <property type="nucleotide sequence ID" value="NM_001405037.1"/>
</dbReference>
<dbReference type="RefSeq" id="NP_080579.1">
    <molecule id="Q80Y20-1"/>
    <property type="nucleotide sequence ID" value="NM_026303.2"/>
</dbReference>
<dbReference type="RefSeq" id="XP_006509943.1">
    <property type="nucleotide sequence ID" value="XM_006509880.3"/>
</dbReference>
<dbReference type="SMR" id="Q80Y20"/>
<dbReference type="FunCoup" id="Q80Y20">
    <property type="interactions" value="3748"/>
</dbReference>
<dbReference type="STRING" id="10090.ENSMUSP00000148653"/>
<dbReference type="GlyGen" id="Q80Y20">
    <property type="glycosylation" value="1 site, 1 N-linked glycan (1 site)"/>
</dbReference>
<dbReference type="PhosphoSitePlus" id="Q80Y20"/>
<dbReference type="PaxDb" id="10090-ENSMUSP00000061511"/>
<dbReference type="PeptideAtlas" id="Q80Y20"/>
<dbReference type="ProteomicsDB" id="282073">
    <molecule id="Q80Y20-1"/>
</dbReference>
<dbReference type="ProteomicsDB" id="282074">
    <molecule id="Q80Y20-2"/>
</dbReference>
<dbReference type="ProteomicsDB" id="282075">
    <molecule id="Q80Y20-3"/>
</dbReference>
<dbReference type="Pumba" id="Q80Y20"/>
<dbReference type="Antibodypedia" id="18165">
    <property type="antibodies" value="147 antibodies from 25 providers"/>
</dbReference>
<dbReference type="DNASU" id="67667"/>
<dbReference type="Ensembl" id="ENSMUST00000053407.13">
    <molecule id="Q80Y20-1"/>
    <property type="protein sequence ID" value="ENSMUSP00000061511.6"/>
    <property type="gene ID" value="ENSMUSG00000025899.15"/>
</dbReference>
<dbReference type="Ensembl" id="ENSMUST00000165105.2">
    <molecule id="Q80Y20-1"/>
    <property type="protein sequence ID" value="ENSMUSP00000125996.2"/>
    <property type="gene ID" value="ENSMUSG00000025899.15"/>
</dbReference>
<dbReference type="Ensembl" id="ENSMUST00000211933.2">
    <molecule id="Q80Y20-1"/>
    <property type="protein sequence ID" value="ENSMUSP00000148653.2"/>
    <property type="gene ID" value="ENSMUSG00000025899.15"/>
</dbReference>
<dbReference type="Ensembl" id="ENSMUST00000212294.2">
    <molecule id="Q80Y20-2"/>
    <property type="protein sequence ID" value="ENSMUSP00000148380.2"/>
    <property type="gene ID" value="ENSMUSG00000025899.15"/>
</dbReference>
<dbReference type="GeneID" id="67667"/>
<dbReference type="KEGG" id="mmu:67667"/>
<dbReference type="UCSC" id="uc009oat.1">
    <molecule id="Q80Y20-1"/>
    <property type="organism name" value="mouse"/>
</dbReference>
<dbReference type="UCSC" id="uc009oau.1">
    <molecule id="Q80Y20-3"/>
    <property type="organism name" value="mouse"/>
</dbReference>
<dbReference type="UCSC" id="uc012gnj.1">
    <molecule id="Q80Y20-2"/>
    <property type="organism name" value="mouse"/>
</dbReference>
<dbReference type="AGR" id="MGI:1914917"/>
<dbReference type="CTD" id="91801"/>
<dbReference type="MGI" id="MGI:1914917">
    <property type="gene designation" value="Alkbh8"/>
</dbReference>
<dbReference type="VEuPathDB" id="HostDB:ENSMUSG00000025899"/>
<dbReference type="eggNOG" id="KOG1331">
    <property type="taxonomic scope" value="Eukaryota"/>
</dbReference>
<dbReference type="eggNOG" id="KOG4176">
    <property type="taxonomic scope" value="Eukaryota"/>
</dbReference>
<dbReference type="GeneTree" id="ENSGT00940000158563"/>
<dbReference type="HOGENOM" id="CLU_029501_4_0_1"/>
<dbReference type="InParanoid" id="Q80Y20"/>
<dbReference type="OMA" id="KYLGCNP"/>
<dbReference type="OrthoDB" id="271595at2759"/>
<dbReference type="PhylomeDB" id="Q80Y20"/>
<dbReference type="TreeFam" id="TF316056"/>
<dbReference type="BRENDA" id="2.1.1.229">
    <property type="organism ID" value="3474"/>
</dbReference>
<dbReference type="BioGRID-ORCS" id="67667">
    <property type="hits" value="5 hits in 77 CRISPR screens"/>
</dbReference>
<dbReference type="ChiTaRS" id="Alkbh8">
    <property type="organism name" value="mouse"/>
</dbReference>
<dbReference type="PRO" id="PR:Q80Y20"/>
<dbReference type="Proteomes" id="UP000000589">
    <property type="component" value="Chromosome 9"/>
</dbReference>
<dbReference type="RNAct" id="Q80Y20">
    <property type="molecule type" value="protein"/>
</dbReference>
<dbReference type="Bgee" id="ENSMUSG00000025899">
    <property type="expression patterns" value="Expressed in manus and 230 other cell types or tissues"/>
</dbReference>
<dbReference type="ExpressionAtlas" id="Q80Y20">
    <property type="expression patterns" value="baseline and differential"/>
</dbReference>
<dbReference type="GO" id="GO:0005829">
    <property type="term" value="C:cytosol"/>
    <property type="evidence" value="ECO:0000250"/>
    <property type="project" value="UniProtKB"/>
</dbReference>
<dbReference type="GO" id="GO:0005654">
    <property type="term" value="C:nucleoplasm"/>
    <property type="evidence" value="ECO:0007669"/>
    <property type="project" value="Ensembl"/>
</dbReference>
<dbReference type="GO" id="GO:0005634">
    <property type="term" value="C:nucleus"/>
    <property type="evidence" value="ECO:0000250"/>
    <property type="project" value="UniProtKB"/>
</dbReference>
<dbReference type="GO" id="GO:0016706">
    <property type="term" value="F:2-oxoglutarate-dependent dioxygenase activity"/>
    <property type="evidence" value="ECO:0007669"/>
    <property type="project" value="InterPro"/>
</dbReference>
<dbReference type="GO" id="GO:0005506">
    <property type="term" value="F:iron ion binding"/>
    <property type="evidence" value="ECO:0000314"/>
    <property type="project" value="UniProtKB"/>
</dbReference>
<dbReference type="GO" id="GO:0008757">
    <property type="term" value="F:S-adenosylmethionine-dependent methyltransferase activity"/>
    <property type="evidence" value="ECO:0007669"/>
    <property type="project" value="InterPro"/>
</dbReference>
<dbReference type="GO" id="GO:0106335">
    <property type="term" value="F:tRNA (5-carboxymethyluridine(34)-5-O)-methyltransferase activity"/>
    <property type="evidence" value="ECO:0000314"/>
    <property type="project" value="MGI"/>
</dbReference>
<dbReference type="GO" id="GO:0016300">
    <property type="term" value="F:tRNA (uridine) methyltransferase activity"/>
    <property type="evidence" value="ECO:0000315"/>
    <property type="project" value="UniProtKB"/>
</dbReference>
<dbReference type="GO" id="GO:0000049">
    <property type="term" value="F:tRNA binding"/>
    <property type="evidence" value="ECO:0000250"/>
    <property type="project" value="UniProtKB"/>
</dbReference>
<dbReference type="GO" id="GO:0008270">
    <property type="term" value="F:zinc ion binding"/>
    <property type="evidence" value="ECO:0000250"/>
    <property type="project" value="UniProtKB"/>
</dbReference>
<dbReference type="GO" id="GO:0006974">
    <property type="term" value="P:DNA damage response"/>
    <property type="evidence" value="ECO:0000250"/>
    <property type="project" value="UniProtKB"/>
</dbReference>
<dbReference type="GO" id="GO:0030488">
    <property type="term" value="P:tRNA methylation"/>
    <property type="evidence" value="ECO:0000315"/>
    <property type="project" value="UniProtKB"/>
</dbReference>
<dbReference type="GO" id="GO:0002098">
    <property type="term" value="P:tRNA wobble uridine modification"/>
    <property type="evidence" value="ECO:0000314"/>
    <property type="project" value="UniProtKB"/>
</dbReference>
<dbReference type="CDD" id="cd02440">
    <property type="entry name" value="AdoMet_MTases"/>
    <property type="match status" value="1"/>
</dbReference>
<dbReference type="CDD" id="cd12431">
    <property type="entry name" value="RRM_ALKBH8"/>
    <property type="match status" value="1"/>
</dbReference>
<dbReference type="FunFam" id="2.60.120.590:FF:000012">
    <property type="entry name" value="AlkB homolog 8, tRNA methyltransferase"/>
    <property type="match status" value="1"/>
</dbReference>
<dbReference type="FunFam" id="3.30.70.330:FF:000313">
    <property type="entry name" value="Alkylated DNA repair protein alkB homolog 8"/>
    <property type="match status" value="1"/>
</dbReference>
<dbReference type="Gene3D" id="3.30.70.330">
    <property type="match status" value="1"/>
</dbReference>
<dbReference type="Gene3D" id="2.60.120.590">
    <property type="entry name" value="Alpha-ketoglutarate-dependent dioxygenase AlkB-like"/>
    <property type="match status" value="1"/>
</dbReference>
<dbReference type="Gene3D" id="3.40.50.150">
    <property type="entry name" value="Vaccinia Virus protein VP39"/>
    <property type="match status" value="1"/>
</dbReference>
<dbReference type="InterPro" id="IPR027450">
    <property type="entry name" value="AlkB-like"/>
</dbReference>
<dbReference type="InterPro" id="IPR037151">
    <property type="entry name" value="AlkB-like_sf"/>
</dbReference>
<dbReference type="InterPro" id="IPR015095">
    <property type="entry name" value="AlkB_hom8_N"/>
</dbReference>
<dbReference type="InterPro" id="IPR051422">
    <property type="entry name" value="AlkB_tRNA_MeTrf/Diox"/>
</dbReference>
<dbReference type="InterPro" id="IPR034256">
    <property type="entry name" value="ALKBH8_RRM"/>
</dbReference>
<dbReference type="InterPro" id="IPR013216">
    <property type="entry name" value="Methyltransf_11"/>
</dbReference>
<dbReference type="InterPro" id="IPR012677">
    <property type="entry name" value="Nucleotide-bd_a/b_plait_sf"/>
</dbReference>
<dbReference type="InterPro" id="IPR005123">
    <property type="entry name" value="Oxoglu/Fe-dep_dioxygenase_dom"/>
</dbReference>
<dbReference type="InterPro" id="IPR035979">
    <property type="entry name" value="RBD_domain_sf"/>
</dbReference>
<dbReference type="InterPro" id="IPR000504">
    <property type="entry name" value="RRM_dom"/>
</dbReference>
<dbReference type="InterPro" id="IPR029063">
    <property type="entry name" value="SAM-dependent_MTases_sf"/>
</dbReference>
<dbReference type="PANTHER" id="PTHR13069">
    <property type="entry name" value="ALKYLATED DNA REPAIR PROTEIN ALKB HOMOLOG 8"/>
    <property type="match status" value="1"/>
</dbReference>
<dbReference type="PANTHER" id="PTHR13069:SF21">
    <property type="entry name" value="ALKYLATED DNA REPAIR PROTEIN ALKB HOMOLOG 8"/>
    <property type="match status" value="1"/>
</dbReference>
<dbReference type="Pfam" id="PF13532">
    <property type="entry name" value="2OG-FeII_Oxy_2"/>
    <property type="match status" value="1"/>
</dbReference>
<dbReference type="Pfam" id="PF09004">
    <property type="entry name" value="ALKBH8_N"/>
    <property type="match status" value="1"/>
</dbReference>
<dbReference type="Pfam" id="PF08241">
    <property type="entry name" value="Methyltransf_11"/>
    <property type="match status" value="1"/>
</dbReference>
<dbReference type="Pfam" id="PF00076">
    <property type="entry name" value="RRM_1"/>
    <property type="match status" value="1"/>
</dbReference>
<dbReference type="SUPFAM" id="SSF51197">
    <property type="entry name" value="Clavaminate synthase-like"/>
    <property type="match status" value="1"/>
</dbReference>
<dbReference type="SUPFAM" id="SSF54928">
    <property type="entry name" value="RNA-binding domain, RBD"/>
    <property type="match status" value="1"/>
</dbReference>
<dbReference type="SUPFAM" id="SSF53335">
    <property type="entry name" value="S-adenosyl-L-methionine-dependent methyltransferases"/>
    <property type="match status" value="1"/>
</dbReference>
<dbReference type="PROSITE" id="PS51471">
    <property type="entry name" value="FE2OG_OXY"/>
    <property type="match status" value="1"/>
</dbReference>
<dbReference type="PROSITE" id="PS50102">
    <property type="entry name" value="RRM"/>
    <property type="match status" value="1"/>
</dbReference>
<reference key="1">
    <citation type="journal article" date="2005" name="Science">
        <title>The transcriptional landscape of the mammalian genome.</title>
        <authorList>
            <person name="Carninci P."/>
            <person name="Kasukawa T."/>
            <person name="Katayama S."/>
            <person name="Gough J."/>
            <person name="Frith M.C."/>
            <person name="Maeda N."/>
            <person name="Oyama R."/>
            <person name="Ravasi T."/>
            <person name="Lenhard B."/>
            <person name="Wells C."/>
            <person name="Kodzius R."/>
            <person name="Shimokawa K."/>
            <person name="Bajic V.B."/>
            <person name="Brenner S.E."/>
            <person name="Batalov S."/>
            <person name="Forrest A.R."/>
            <person name="Zavolan M."/>
            <person name="Davis M.J."/>
            <person name="Wilming L.G."/>
            <person name="Aidinis V."/>
            <person name="Allen J.E."/>
            <person name="Ambesi-Impiombato A."/>
            <person name="Apweiler R."/>
            <person name="Aturaliya R.N."/>
            <person name="Bailey T.L."/>
            <person name="Bansal M."/>
            <person name="Baxter L."/>
            <person name="Beisel K.W."/>
            <person name="Bersano T."/>
            <person name="Bono H."/>
            <person name="Chalk A.M."/>
            <person name="Chiu K.P."/>
            <person name="Choudhary V."/>
            <person name="Christoffels A."/>
            <person name="Clutterbuck D.R."/>
            <person name="Crowe M.L."/>
            <person name="Dalla E."/>
            <person name="Dalrymple B.P."/>
            <person name="de Bono B."/>
            <person name="Della Gatta G."/>
            <person name="di Bernardo D."/>
            <person name="Down T."/>
            <person name="Engstrom P."/>
            <person name="Fagiolini M."/>
            <person name="Faulkner G."/>
            <person name="Fletcher C.F."/>
            <person name="Fukushima T."/>
            <person name="Furuno M."/>
            <person name="Futaki S."/>
            <person name="Gariboldi M."/>
            <person name="Georgii-Hemming P."/>
            <person name="Gingeras T.R."/>
            <person name="Gojobori T."/>
            <person name="Green R.E."/>
            <person name="Gustincich S."/>
            <person name="Harbers M."/>
            <person name="Hayashi Y."/>
            <person name="Hensch T.K."/>
            <person name="Hirokawa N."/>
            <person name="Hill D."/>
            <person name="Huminiecki L."/>
            <person name="Iacono M."/>
            <person name="Ikeo K."/>
            <person name="Iwama A."/>
            <person name="Ishikawa T."/>
            <person name="Jakt M."/>
            <person name="Kanapin A."/>
            <person name="Katoh M."/>
            <person name="Kawasawa Y."/>
            <person name="Kelso J."/>
            <person name="Kitamura H."/>
            <person name="Kitano H."/>
            <person name="Kollias G."/>
            <person name="Krishnan S.P."/>
            <person name="Kruger A."/>
            <person name="Kummerfeld S.K."/>
            <person name="Kurochkin I.V."/>
            <person name="Lareau L.F."/>
            <person name="Lazarevic D."/>
            <person name="Lipovich L."/>
            <person name="Liu J."/>
            <person name="Liuni S."/>
            <person name="McWilliam S."/>
            <person name="Madan Babu M."/>
            <person name="Madera M."/>
            <person name="Marchionni L."/>
            <person name="Matsuda H."/>
            <person name="Matsuzawa S."/>
            <person name="Miki H."/>
            <person name="Mignone F."/>
            <person name="Miyake S."/>
            <person name="Morris K."/>
            <person name="Mottagui-Tabar S."/>
            <person name="Mulder N."/>
            <person name="Nakano N."/>
            <person name="Nakauchi H."/>
            <person name="Ng P."/>
            <person name="Nilsson R."/>
            <person name="Nishiguchi S."/>
            <person name="Nishikawa S."/>
            <person name="Nori F."/>
            <person name="Ohara O."/>
            <person name="Okazaki Y."/>
            <person name="Orlando V."/>
            <person name="Pang K.C."/>
            <person name="Pavan W.J."/>
            <person name="Pavesi G."/>
            <person name="Pesole G."/>
            <person name="Petrovsky N."/>
            <person name="Piazza S."/>
            <person name="Reed J."/>
            <person name="Reid J.F."/>
            <person name="Ring B.Z."/>
            <person name="Ringwald M."/>
            <person name="Rost B."/>
            <person name="Ruan Y."/>
            <person name="Salzberg S.L."/>
            <person name="Sandelin A."/>
            <person name="Schneider C."/>
            <person name="Schoenbach C."/>
            <person name="Sekiguchi K."/>
            <person name="Semple C.A."/>
            <person name="Seno S."/>
            <person name="Sessa L."/>
            <person name="Sheng Y."/>
            <person name="Shibata Y."/>
            <person name="Shimada H."/>
            <person name="Shimada K."/>
            <person name="Silva D."/>
            <person name="Sinclair B."/>
            <person name="Sperling S."/>
            <person name="Stupka E."/>
            <person name="Sugiura K."/>
            <person name="Sultana R."/>
            <person name="Takenaka Y."/>
            <person name="Taki K."/>
            <person name="Tammoja K."/>
            <person name="Tan S.L."/>
            <person name="Tang S."/>
            <person name="Taylor M.S."/>
            <person name="Tegner J."/>
            <person name="Teichmann S.A."/>
            <person name="Ueda H.R."/>
            <person name="van Nimwegen E."/>
            <person name="Verardo R."/>
            <person name="Wei C.L."/>
            <person name="Yagi K."/>
            <person name="Yamanishi H."/>
            <person name="Zabarovsky E."/>
            <person name="Zhu S."/>
            <person name="Zimmer A."/>
            <person name="Hide W."/>
            <person name="Bult C."/>
            <person name="Grimmond S.M."/>
            <person name="Teasdale R.D."/>
            <person name="Liu E.T."/>
            <person name="Brusic V."/>
            <person name="Quackenbush J."/>
            <person name="Wahlestedt C."/>
            <person name="Mattick J.S."/>
            <person name="Hume D.A."/>
            <person name="Kai C."/>
            <person name="Sasaki D."/>
            <person name="Tomaru Y."/>
            <person name="Fukuda S."/>
            <person name="Kanamori-Katayama M."/>
            <person name="Suzuki M."/>
            <person name="Aoki J."/>
            <person name="Arakawa T."/>
            <person name="Iida J."/>
            <person name="Imamura K."/>
            <person name="Itoh M."/>
            <person name="Kato T."/>
            <person name="Kawaji H."/>
            <person name="Kawagashira N."/>
            <person name="Kawashima T."/>
            <person name="Kojima M."/>
            <person name="Kondo S."/>
            <person name="Konno H."/>
            <person name="Nakano K."/>
            <person name="Ninomiya N."/>
            <person name="Nishio T."/>
            <person name="Okada M."/>
            <person name="Plessy C."/>
            <person name="Shibata K."/>
            <person name="Shiraki T."/>
            <person name="Suzuki S."/>
            <person name="Tagami M."/>
            <person name="Waki K."/>
            <person name="Watahiki A."/>
            <person name="Okamura-Oho Y."/>
            <person name="Suzuki H."/>
            <person name="Kawai J."/>
            <person name="Hayashizaki Y."/>
        </authorList>
    </citation>
    <scope>NUCLEOTIDE SEQUENCE [LARGE SCALE MRNA] (ISOFORMS 2 AND 3)</scope>
    <source>
        <strain>C57BL/6J</strain>
        <tissue>Head</tissue>
        <tissue>Testis</tissue>
    </source>
</reference>
<reference key="2">
    <citation type="journal article" date="2004" name="Genome Res.">
        <title>The status, quality, and expansion of the NIH full-length cDNA project: the Mammalian Gene Collection (MGC).</title>
        <authorList>
            <consortium name="The MGC Project Team"/>
        </authorList>
    </citation>
    <scope>NUCLEOTIDE SEQUENCE [LARGE SCALE MRNA] (ISOFORM 1)</scope>
    <source>
        <tissue>Embryo</tissue>
    </source>
</reference>
<reference key="3">
    <citation type="journal article" date="2010" name="Angew. Chem. Int. Ed. Engl.">
        <title>The AlkB domain of mammalian ABH8 catalyzes hydroxylation of 5-methoxycarbonylmethyluridine at the wobble position of tRNA.</title>
        <authorList>
            <person name="Fu Y."/>
            <person name="Dai Q."/>
            <person name="Zhang W."/>
            <person name="Ren J."/>
            <person name="Pan T."/>
            <person name="He C."/>
        </authorList>
    </citation>
    <scope>FUNCTION</scope>
    <scope>COFACTOR</scope>
    <scope>LACK OF DEMETHYLASE ACTIVITY</scope>
    <scope>DOMAIN</scope>
    <scope>MUTAGENESIS OF HIS-238 AND ASP-240</scope>
</reference>
<reference key="4">
    <citation type="journal article" date="2010" name="Cell">
        <title>A tissue-specific atlas of mouse protein phosphorylation and expression.</title>
        <authorList>
            <person name="Huttlin E.L."/>
            <person name="Jedrychowski M.P."/>
            <person name="Elias J.E."/>
            <person name="Goswami T."/>
            <person name="Rad R."/>
            <person name="Beausoleil S.A."/>
            <person name="Villen J."/>
            <person name="Haas W."/>
            <person name="Sowa M.E."/>
            <person name="Gygi S.P."/>
        </authorList>
    </citation>
    <scope>IDENTIFICATION BY MASS SPECTROMETRY [LARGE SCALE ANALYSIS]</scope>
    <source>
        <tissue>Spleen</tissue>
    </source>
</reference>
<reference key="5">
    <citation type="journal article" date="2010" name="Mol. Cell. Biol.">
        <title>Mammalian ALKBH8 possesses tRNA methyltransferase activity required for the biogenesis of multiple wobble uridine modifications implicated in translational decoding.</title>
        <authorList>
            <person name="Songe-Moller L."/>
            <person name="van den Born E."/>
            <person name="Leihne V."/>
            <person name="Vagbo C.B."/>
            <person name="Kristoffersen T."/>
            <person name="Krokan H.E."/>
            <person name="Kirpekar F."/>
            <person name="Falnes P.O."/>
            <person name="Klungland A."/>
        </authorList>
    </citation>
    <scope>DISRUPTION PHENOTYPE</scope>
    <scope>FUNCTION</scope>
</reference>
<feature type="chain" id="PRO_0000337127" description="tRNA (carboxymethyluridine(34)-5-O)-methyltransferase ALKBH8">
    <location>
        <begin position="1"/>
        <end position="664"/>
    </location>
</feature>
<feature type="domain" description="RRM" evidence="3">
    <location>
        <begin position="45"/>
        <end position="120"/>
    </location>
</feature>
<feature type="domain" description="Fe2OG dioxygenase" evidence="4">
    <location>
        <begin position="220"/>
        <end position="337"/>
    </location>
</feature>
<feature type="region of interest" description="Methyltransferase domain" evidence="1">
    <location>
        <begin position="411"/>
        <end position="664"/>
    </location>
</feature>
<feature type="binding site" evidence="2">
    <location>
        <begin position="227"/>
        <end position="229"/>
    </location>
    <ligand>
        <name>2-oxoglutarate</name>
        <dbReference type="ChEBI" id="CHEBI:16810"/>
    </ligand>
</feature>
<feature type="binding site" evidence="4 9">
    <location>
        <position position="238"/>
    </location>
    <ligand>
        <name>Fe cation</name>
        <dbReference type="ChEBI" id="CHEBI:24875"/>
        <note>catalytic</note>
    </ligand>
</feature>
<feature type="binding site" evidence="4 9">
    <location>
        <position position="240"/>
    </location>
    <ligand>
        <name>Fe cation</name>
        <dbReference type="ChEBI" id="CHEBI:24875"/>
        <note>catalytic</note>
    </ligand>
</feature>
<feature type="binding site" evidence="2">
    <location>
        <position position="242"/>
    </location>
    <ligand>
        <name>Zn(2+)</name>
        <dbReference type="ChEBI" id="CHEBI:29105"/>
    </ligand>
</feature>
<feature type="binding site" evidence="4">
    <location>
        <position position="292"/>
    </location>
    <ligand>
        <name>Fe cation</name>
        <dbReference type="ChEBI" id="CHEBI:24875"/>
        <note>catalytic</note>
    </ligand>
</feature>
<feature type="binding site" evidence="2">
    <location>
        <position position="328"/>
    </location>
    <ligand>
        <name>2-oxoglutarate</name>
        <dbReference type="ChEBI" id="CHEBI:16810"/>
    </ligand>
</feature>
<feature type="binding site" evidence="2">
    <location>
        <position position="334"/>
    </location>
    <ligand>
        <name>2-oxoglutarate</name>
        <dbReference type="ChEBI" id="CHEBI:16810"/>
    </ligand>
</feature>
<feature type="binding site" evidence="2">
    <location>
        <position position="341"/>
    </location>
    <ligand>
        <name>Zn(2+)</name>
        <dbReference type="ChEBI" id="CHEBI:29105"/>
    </ligand>
</feature>
<feature type="binding site" evidence="2">
    <location>
        <position position="343"/>
    </location>
    <ligand>
        <name>Zn(2+)</name>
        <dbReference type="ChEBI" id="CHEBI:29105"/>
    </ligand>
</feature>
<feature type="binding site" evidence="2">
    <location>
        <position position="349"/>
    </location>
    <ligand>
        <name>Zn(2+)</name>
        <dbReference type="ChEBI" id="CHEBI:29105"/>
    </ligand>
</feature>
<feature type="splice variant" id="VSP_033929" description="In isoform 3." evidence="7">
    <original>AQWKNMGLEALPPGLLVVEEIISSEEEKKLLESVNWTEDTGNQNFQR</original>
    <variation>GTLTLASFNLLFLCEFSSYRESLSIILYVWEVCAGVLDHAVPVGVKG</variation>
    <location>
        <begin position="123"/>
        <end position="169"/>
    </location>
</feature>
<feature type="splice variant" id="VSP_033930" description="In isoform 3." evidence="7">
    <location>
        <begin position="170"/>
        <end position="664"/>
    </location>
</feature>
<feature type="splice variant" id="VSP_033931" description="In isoform 2." evidence="7">
    <location>
        <begin position="199"/>
        <end position="233"/>
    </location>
</feature>
<feature type="mutagenesis site" description="Abolishes hydroxylation of 5-methylcarboxymethyl uridine." evidence="6">
    <original>H</original>
    <variation>A</variation>
    <location>
        <position position="238"/>
    </location>
</feature>
<feature type="mutagenesis site" description="Abolishes hydroxylation of 5-methylcarboxymethyl uridine." evidence="6">
    <original>D</original>
    <variation>A</variation>
    <location>
        <position position="240"/>
    </location>
</feature>
<feature type="sequence conflict" description="In Ref. 1; BAC38223." evidence="8" ref="1">
    <original>Q</original>
    <variation>H</variation>
    <location>
        <position position="88"/>
    </location>
</feature>
<feature type="sequence conflict" description="In Ref. 1; BAC38223." evidence="8" ref="1">
    <original>A</original>
    <variation>T</variation>
    <location>
        <position position="132"/>
    </location>
</feature>
<feature type="sequence conflict" description="In Ref. 1; BAC38223." evidence="8" ref="1">
    <original>K</original>
    <variation>R</variation>
    <location>
        <position position="151"/>
    </location>
</feature>
<gene>
    <name type="primary">Alkbh8</name>
</gene>
<organism>
    <name type="scientific">Mus musculus</name>
    <name type="common">Mouse</name>
    <dbReference type="NCBI Taxonomy" id="10090"/>
    <lineage>
        <taxon>Eukaryota</taxon>
        <taxon>Metazoa</taxon>
        <taxon>Chordata</taxon>
        <taxon>Craniata</taxon>
        <taxon>Vertebrata</taxon>
        <taxon>Euteleostomi</taxon>
        <taxon>Mammalia</taxon>
        <taxon>Eutheria</taxon>
        <taxon>Euarchontoglires</taxon>
        <taxon>Glires</taxon>
        <taxon>Rodentia</taxon>
        <taxon>Myomorpha</taxon>
        <taxon>Muroidea</taxon>
        <taxon>Muridae</taxon>
        <taxon>Murinae</taxon>
        <taxon>Mus</taxon>
        <taxon>Mus</taxon>
    </lineage>
</organism>
<proteinExistence type="evidence at protein level"/>
<comment type="function">
    <text evidence="2 5 6">Catalyzes the methylation of 5-carboxymethyl uridine to 5-methylcarboxymethyl uridine at the wobble position of the anticodon loop in tRNA via its methyltransferase domain (PubMed:20123966). Catalyzes the last step in the formation of 5-methylcarboxymethyl uridine at the wobble position of the anticodon loop in target tRNA (PubMed:20123966). Has a preference for tRNA(Arg) and tRNA(Glu), and does not bind tRNA(Lys) (By similarity). Binds tRNA and catalyzes the iron and alpha-ketoglutarate dependent hydroxylation of 5-methylcarboxymethyl uridine at the wobble position of the anticodon loop in tRNA via its dioxygenase domain, giving rise to 5-(S)-methoxycarbonylhydroxymethyluridine; has a preference for tRNA(Gly) (PubMed:20583019). Required for normal survival after DNA damage (By similarity). May inhibit apoptosis and promote cell survival and angiogenesis (By similarity).</text>
</comment>
<comment type="catalytic activity">
    <reaction>
        <text>5-(carboxymethyl)uridine(34) in tRNA + S-adenosyl-L-methionine = 5-(2-methoxy-2-oxoethyl)uridine(34) in tRNA + S-adenosyl-L-homocysteine</text>
        <dbReference type="Rhea" id="RHEA:43208"/>
        <dbReference type="Rhea" id="RHEA-COMP:10407"/>
        <dbReference type="Rhea" id="RHEA-COMP:10408"/>
        <dbReference type="ChEBI" id="CHEBI:57856"/>
        <dbReference type="ChEBI" id="CHEBI:59789"/>
        <dbReference type="ChEBI" id="CHEBI:74851"/>
        <dbReference type="ChEBI" id="CHEBI:74882"/>
        <dbReference type="EC" id="2.1.1.229"/>
    </reaction>
</comment>
<comment type="cofactor">
    <cofactor evidence="6">
        <name>Fe(2+)</name>
        <dbReference type="ChEBI" id="CHEBI:29033"/>
    </cofactor>
    <text evidence="8">Binds 1 Fe(2+) ion per subunit.</text>
</comment>
<comment type="subunit">
    <text evidence="2">Interacts with TRMT112.</text>
</comment>
<comment type="subcellular location">
    <subcellularLocation>
        <location evidence="2">Cytoplasm</location>
    </subcellularLocation>
    <subcellularLocation>
        <location evidence="2">Nucleus</location>
    </subcellularLocation>
    <text evidence="2">Predominantly cytoplasmic.</text>
</comment>
<comment type="alternative products">
    <event type="alternative splicing"/>
    <isoform>
        <id>Q80Y20-1</id>
        <name>1</name>
        <sequence type="displayed"/>
    </isoform>
    <isoform>
        <id>Q80Y20-2</id>
        <name>2</name>
        <sequence type="described" ref="VSP_033931"/>
    </isoform>
    <isoform>
        <id>Q80Y20-3</id>
        <name>3</name>
        <sequence type="described" ref="VSP_033929 VSP_033930"/>
    </isoform>
</comment>
<comment type="domain">
    <text evidence="6">The Fe2OG dioxygenase domain does not have demethylase activity with methylated nucleotides.</text>
</comment>
<comment type="disruption phenotype">
    <text evidence="5">No visible phenotype.</text>
</comment>
<comment type="similarity">
    <text evidence="8">Belongs to the alkB family.</text>
</comment>
<comment type="sequence caution" evidence="8">
    <conflict type="frameshift">
        <sequence resource="EMBL-CDS" id="BAC38223"/>
    </conflict>
</comment>
<evidence type="ECO:0000250" key="1"/>
<evidence type="ECO:0000250" key="2">
    <source>
        <dbReference type="UniProtKB" id="Q96BT7"/>
    </source>
</evidence>
<evidence type="ECO:0000255" key="3">
    <source>
        <dbReference type="PROSITE-ProRule" id="PRU00176"/>
    </source>
</evidence>
<evidence type="ECO:0000255" key="4">
    <source>
        <dbReference type="PROSITE-ProRule" id="PRU00805"/>
    </source>
</evidence>
<evidence type="ECO:0000269" key="5">
    <source>
    </source>
</evidence>
<evidence type="ECO:0000269" key="6">
    <source>
    </source>
</evidence>
<evidence type="ECO:0000303" key="7">
    <source>
    </source>
</evidence>
<evidence type="ECO:0000305" key="8"/>
<evidence type="ECO:0000305" key="9">
    <source>
    </source>
</evidence>